<name>NDK_BORBU</name>
<organism>
    <name type="scientific">Borreliella burgdorferi (strain ATCC 35210 / DSM 4680 / CIP 102532 / B31)</name>
    <name type="common">Borrelia burgdorferi</name>
    <dbReference type="NCBI Taxonomy" id="224326"/>
    <lineage>
        <taxon>Bacteria</taxon>
        <taxon>Pseudomonadati</taxon>
        <taxon>Spirochaetota</taxon>
        <taxon>Spirochaetia</taxon>
        <taxon>Spirochaetales</taxon>
        <taxon>Borreliaceae</taxon>
        <taxon>Borreliella</taxon>
    </lineage>
</organism>
<accession>O51419</accession>
<sequence>MLLQKTLCIVKPDGVRRGLIGDVVSRFERVGLKMVAAKMLIVDESLAKKHYLYDDIVFRHSEAVWNSLIKFISNSPVFTFVVEGVESIEVVRKLCGATEPKLAIPGTIRGDFSYHSFKYSNEKGFSIYNVIHASANEADAMREIPIWFKDNEILNYKRDDECEHYYC</sequence>
<proteinExistence type="evidence at protein level"/>
<feature type="chain" id="PRO_0000136951" description="Nucleoside diphosphate kinase">
    <location>
        <begin position="1"/>
        <end position="167"/>
    </location>
</feature>
<feature type="active site" description="Pros-phosphohistidine intermediate" evidence="1">
    <location>
        <position position="132"/>
    </location>
</feature>
<feature type="binding site" evidence="1">
    <location>
        <position position="11"/>
    </location>
    <ligand>
        <name>ATP</name>
        <dbReference type="ChEBI" id="CHEBI:30616"/>
    </ligand>
</feature>
<feature type="binding site" evidence="1">
    <location>
        <position position="92"/>
    </location>
    <ligand>
        <name>ATP</name>
        <dbReference type="ChEBI" id="CHEBI:30616"/>
    </ligand>
</feature>
<feature type="binding site" evidence="1">
    <location>
        <position position="98"/>
    </location>
    <ligand>
        <name>ATP</name>
        <dbReference type="ChEBI" id="CHEBI:30616"/>
    </ligand>
</feature>
<feature type="binding site" evidence="1">
    <location>
        <position position="109"/>
    </location>
    <ligand>
        <name>ATP</name>
        <dbReference type="ChEBI" id="CHEBI:30616"/>
    </ligand>
</feature>
<feature type="binding site" evidence="1">
    <location>
        <position position="129"/>
    </location>
    <ligand>
        <name>ATP</name>
        <dbReference type="ChEBI" id="CHEBI:30616"/>
    </ligand>
</feature>
<feature type="strand" evidence="3">
    <location>
        <begin position="3"/>
        <end position="10"/>
    </location>
</feature>
<feature type="helix" evidence="3">
    <location>
        <begin position="12"/>
        <end position="16"/>
    </location>
</feature>
<feature type="helix" evidence="3">
    <location>
        <begin position="20"/>
        <end position="30"/>
    </location>
</feature>
<feature type="strand" evidence="3">
    <location>
        <begin position="33"/>
        <end position="41"/>
    </location>
</feature>
<feature type="helix" evidence="3">
    <location>
        <begin position="44"/>
        <end position="50"/>
    </location>
</feature>
<feature type="helix" evidence="3">
    <location>
        <begin position="53"/>
        <end position="59"/>
    </location>
</feature>
<feature type="helix" evidence="3">
    <location>
        <begin position="62"/>
        <end position="72"/>
    </location>
</feature>
<feature type="strand" evidence="3">
    <location>
        <begin position="75"/>
        <end position="85"/>
    </location>
</feature>
<feature type="helix" evidence="3">
    <location>
        <begin position="87"/>
        <end position="95"/>
    </location>
</feature>
<feature type="helix" evidence="3">
    <location>
        <begin position="100"/>
        <end position="102"/>
    </location>
</feature>
<feature type="helix" evidence="3">
    <location>
        <begin position="108"/>
        <end position="112"/>
    </location>
</feature>
<feature type="helix" evidence="3">
    <location>
        <begin position="117"/>
        <end position="123"/>
    </location>
</feature>
<feature type="strand" evidence="3">
    <location>
        <begin position="130"/>
        <end position="133"/>
    </location>
</feature>
<feature type="helix" evidence="3">
    <location>
        <begin position="137"/>
        <end position="147"/>
    </location>
</feature>
<feature type="helix" evidence="3">
    <location>
        <begin position="150"/>
        <end position="152"/>
    </location>
</feature>
<feature type="helix" evidence="3">
    <location>
        <begin position="161"/>
        <end position="164"/>
    </location>
</feature>
<protein>
    <recommendedName>
        <fullName>Nucleoside diphosphate kinase</fullName>
        <shortName>NDK</shortName>
        <shortName>NDP kinase</shortName>
        <ecNumber>2.7.4.6</ecNumber>
    </recommendedName>
    <alternativeName>
        <fullName>Nucleoside-2-P kinase</fullName>
    </alternativeName>
</protein>
<keyword id="KW-0002">3D-structure</keyword>
<keyword id="KW-0067">ATP-binding</keyword>
<keyword id="KW-0963">Cytoplasm</keyword>
<keyword id="KW-0418">Kinase</keyword>
<keyword id="KW-0460">Magnesium</keyword>
<keyword id="KW-0479">Metal-binding</keyword>
<keyword id="KW-0546">Nucleotide metabolism</keyword>
<keyword id="KW-0547">Nucleotide-binding</keyword>
<keyword id="KW-0597">Phosphoprotein</keyword>
<keyword id="KW-1185">Reference proteome</keyword>
<keyword id="KW-0808">Transferase</keyword>
<evidence type="ECO:0000250" key="1"/>
<evidence type="ECO:0000305" key="2"/>
<evidence type="ECO:0007829" key="3">
    <source>
        <dbReference type="PDB" id="4DZ6"/>
    </source>
</evidence>
<comment type="function">
    <text evidence="1">Major role in the synthesis of nucleoside triphosphates other than ATP. The ATP gamma phosphate is transferred to the NDP beta phosphate via a ping-pong mechanism, using a phosphorylated active-site intermediate (By similarity).</text>
</comment>
<comment type="catalytic activity">
    <reaction>
        <text>a 2'-deoxyribonucleoside 5'-diphosphate + ATP = a 2'-deoxyribonucleoside 5'-triphosphate + ADP</text>
        <dbReference type="Rhea" id="RHEA:44640"/>
        <dbReference type="ChEBI" id="CHEBI:30616"/>
        <dbReference type="ChEBI" id="CHEBI:61560"/>
        <dbReference type="ChEBI" id="CHEBI:73316"/>
        <dbReference type="ChEBI" id="CHEBI:456216"/>
        <dbReference type="EC" id="2.7.4.6"/>
    </reaction>
</comment>
<comment type="catalytic activity">
    <reaction>
        <text>a ribonucleoside 5'-diphosphate + ATP = a ribonucleoside 5'-triphosphate + ADP</text>
        <dbReference type="Rhea" id="RHEA:18113"/>
        <dbReference type="ChEBI" id="CHEBI:30616"/>
        <dbReference type="ChEBI" id="CHEBI:57930"/>
        <dbReference type="ChEBI" id="CHEBI:61557"/>
        <dbReference type="ChEBI" id="CHEBI:456216"/>
        <dbReference type="EC" id="2.7.4.6"/>
    </reaction>
</comment>
<comment type="cofactor">
    <cofactor evidence="1">
        <name>Mg(2+)</name>
        <dbReference type="ChEBI" id="CHEBI:18420"/>
    </cofactor>
</comment>
<comment type="subunit">
    <text evidence="1">Homotetramer.</text>
</comment>
<comment type="subcellular location">
    <subcellularLocation>
        <location evidence="1">Cytoplasm</location>
    </subcellularLocation>
</comment>
<comment type="similarity">
    <text evidence="2">Belongs to the NDK family.</text>
</comment>
<comment type="sequence caution" evidence="2">
    <conflict type="erroneous initiation">
        <sequence resource="EMBL-CDS" id="AAC66829"/>
    </conflict>
</comment>
<reference key="1">
    <citation type="journal article" date="1997" name="Nature">
        <title>Genomic sequence of a Lyme disease spirochaete, Borrelia burgdorferi.</title>
        <authorList>
            <person name="Fraser C.M."/>
            <person name="Casjens S."/>
            <person name="Huang W.M."/>
            <person name="Sutton G.G."/>
            <person name="Clayton R.A."/>
            <person name="Lathigra R."/>
            <person name="White O."/>
            <person name="Ketchum K.A."/>
            <person name="Dodson R.J."/>
            <person name="Hickey E.K."/>
            <person name="Gwinn M.L."/>
            <person name="Dougherty B.A."/>
            <person name="Tomb J.-F."/>
            <person name="Fleischmann R.D."/>
            <person name="Richardson D.L."/>
            <person name="Peterson J.D."/>
            <person name="Kerlavage A.R."/>
            <person name="Quackenbush J."/>
            <person name="Salzberg S.L."/>
            <person name="Hanson M."/>
            <person name="van Vugt R."/>
            <person name="Palmer N."/>
            <person name="Adams M.D."/>
            <person name="Gocayne J.D."/>
            <person name="Weidman J.F."/>
            <person name="Utterback T.R."/>
            <person name="Watthey L."/>
            <person name="McDonald L.A."/>
            <person name="Artiach P."/>
            <person name="Bowman C."/>
            <person name="Garland S.A."/>
            <person name="Fujii C."/>
            <person name="Cotton M.D."/>
            <person name="Horst K."/>
            <person name="Roberts K.M."/>
            <person name="Hatch B."/>
            <person name="Smith H.O."/>
            <person name="Venter J.C."/>
        </authorList>
    </citation>
    <scope>NUCLEOTIDE SEQUENCE [LARGE SCALE GENOMIC DNA]</scope>
    <source>
        <strain>ATCC 35210 / DSM 4680 / CIP 102532 / B31</strain>
    </source>
</reference>
<dbReference type="EC" id="2.7.4.6"/>
<dbReference type="EMBL" id="AE000783">
    <property type="protein sequence ID" value="AAC66829.1"/>
    <property type="status" value="ALT_INIT"/>
    <property type="molecule type" value="Genomic_DNA"/>
</dbReference>
<dbReference type="PIR" id="F70157">
    <property type="entry name" value="F70157"/>
</dbReference>
<dbReference type="RefSeq" id="NP_212597.1">
    <property type="nucleotide sequence ID" value="NC_001318.1"/>
</dbReference>
<dbReference type="PDB" id="4DI6">
    <property type="method" value="X-ray"/>
    <property type="resolution" value="2.40 A"/>
    <property type="chains" value="A/B/C/D/E/F=1-167"/>
</dbReference>
<dbReference type="PDB" id="4DZ6">
    <property type="method" value="X-ray"/>
    <property type="resolution" value="2.20 A"/>
    <property type="chains" value="A/B/C/D/E/F=1-167"/>
</dbReference>
<dbReference type="PDBsum" id="4DI6"/>
<dbReference type="PDBsum" id="4DZ6"/>
<dbReference type="SMR" id="O51419"/>
<dbReference type="STRING" id="224326.BB_0463"/>
<dbReference type="PaxDb" id="224326-BB_0463"/>
<dbReference type="EnsemblBacteria" id="AAC66829">
    <property type="protein sequence ID" value="AAC66829"/>
    <property type="gene ID" value="BB_0463"/>
</dbReference>
<dbReference type="KEGG" id="bbu:BB_0463"/>
<dbReference type="PATRIC" id="fig|224326.49.peg.856"/>
<dbReference type="HOGENOM" id="CLU_060216_6_3_12"/>
<dbReference type="OrthoDB" id="9801161at2"/>
<dbReference type="BRENDA" id="2.7.4.6">
    <property type="organism ID" value="902"/>
</dbReference>
<dbReference type="EvolutionaryTrace" id="O51419"/>
<dbReference type="Proteomes" id="UP000001807">
    <property type="component" value="Chromosome"/>
</dbReference>
<dbReference type="GO" id="GO:0005829">
    <property type="term" value="C:cytosol"/>
    <property type="evidence" value="ECO:0000314"/>
    <property type="project" value="CAFA"/>
</dbReference>
<dbReference type="GO" id="GO:0005524">
    <property type="term" value="F:ATP binding"/>
    <property type="evidence" value="ECO:0007669"/>
    <property type="project" value="UniProtKB-KW"/>
</dbReference>
<dbReference type="GO" id="GO:0046872">
    <property type="term" value="F:metal ion binding"/>
    <property type="evidence" value="ECO:0007669"/>
    <property type="project" value="UniProtKB-KW"/>
</dbReference>
<dbReference type="GO" id="GO:0004550">
    <property type="term" value="F:nucleoside diphosphate kinase activity"/>
    <property type="evidence" value="ECO:0007669"/>
    <property type="project" value="UniProtKB-EC"/>
</dbReference>
<dbReference type="GO" id="GO:0006241">
    <property type="term" value="P:CTP biosynthetic process"/>
    <property type="evidence" value="ECO:0007669"/>
    <property type="project" value="InterPro"/>
</dbReference>
<dbReference type="GO" id="GO:0006183">
    <property type="term" value="P:GTP biosynthetic process"/>
    <property type="evidence" value="ECO:0007669"/>
    <property type="project" value="InterPro"/>
</dbReference>
<dbReference type="GO" id="GO:0006228">
    <property type="term" value="P:UTP biosynthetic process"/>
    <property type="evidence" value="ECO:0007669"/>
    <property type="project" value="InterPro"/>
</dbReference>
<dbReference type="CDD" id="cd04413">
    <property type="entry name" value="NDPk_I"/>
    <property type="match status" value="1"/>
</dbReference>
<dbReference type="FunFam" id="3.30.70.141:FF:000030">
    <property type="entry name" value="Nucleoside diphosphate kinase"/>
    <property type="match status" value="1"/>
</dbReference>
<dbReference type="Gene3D" id="3.30.70.141">
    <property type="entry name" value="Nucleoside diphosphate kinase-like domain"/>
    <property type="match status" value="1"/>
</dbReference>
<dbReference type="InterPro" id="IPR034907">
    <property type="entry name" value="NDK-like_dom"/>
</dbReference>
<dbReference type="InterPro" id="IPR036850">
    <property type="entry name" value="NDK-like_dom_sf"/>
</dbReference>
<dbReference type="InterPro" id="IPR001564">
    <property type="entry name" value="Nucleoside_diP_kinase"/>
</dbReference>
<dbReference type="NCBIfam" id="NF011115">
    <property type="entry name" value="PRK14543.1"/>
    <property type="match status" value="1"/>
</dbReference>
<dbReference type="PANTHER" id="PTHR11349">
    <property type="entry name" value="NUCLEOSIDE DIPHOSPHATE KINASE"/>
    <property type="match status" value="1"/>
</dbReference>
<dbReference type="Pfam" id="PF00334">
    <property type="entry name" value="NDK"/>
    <property type="match status" value="1"/>
</dbReference>
<dbReference type="PRINTS" id="PR01243">
    <property type="entry name" value="NUCDPKINASE"/>
</dbReference>
<dbReference type="SMART" id="SM00562">
    <property type="entry name" value="NDK"/>
    <property type="match status" value="1"/>
</dbReference>
<dbReference type="SUPFAM" id="SSF54919">
    <property type="entry name" value="Nucleoside diphosphate kinase, NDK"/>
    <property type="match status" value="1"/>
</dbReference>
<dbReference type="PROSITE" id="PS51374">
    <property type="entry name" value="NDPK_LIKE"/>
    <property type="match status" value="1"/>
</dbReference>
<gene>
    <name type="primary">ndk</name>
    <name type="ordered locus">BB_0463</name>
</gene>